<comment type="function">
    <text evidence="1">Involved in the synthesis of meso-diaminopimelate (m-DAP or DL-DAP), required for both lysine and peptidoglycan biosynthesis. Catalyzes the direct conversion of tetrahydrodipicolinate to LL-diaminopimelate.</text>
</comment>
<comment type="catalytic activity">
    <reaction evidence="1">
        <text>(2S,6S)-2,6-diaminopimelate + 2-oxoglutarate = (S)-2,3,4,5-tetrahydrodipicolinate + L-glutamate + H2O + H(+)</text>
        <dbReference type="Rhea" id="RHEA:23988"/>
        <dbReference type="ChEBI" id="CHEBI:15377"/>
        <dbReference type="ChEBI" id="CHEBI:15378"/>
        <dbReference type="ChEBI" id="CHEBI:16810"/>
        <dbReference type="ChEBI" id="CHEBI:16845"/>
        <dbReference type="ChEBI" id="CHEBI:29985"/>
        <dbReference type="ChEBI" id="CHEBI:57609"/>
        <dbReference type="EC" id="2.6.1.83"/>
    </reaction>
</comment>
<comment type="cofactor">
    <cofactor evidence="1">
        <name>pyridoxal 5'-phosphate</name>
        <dbReference type="ChEBI" id="CHEBI:597326"/>
    </cofactor>
</comment>
<comment type="pathway">
    <text evidence="1">Amino-acid biosynthesis; L-lysine biosynthesis via DAP pathway; LL-2,6-diaminopimelate from (S)-tetrahydrodipicolinate (aminotransferase route): step 1/1.</text>
</comment>
<comment type="subunit">
    <text evidence="1">Homodimer.</text>
</comment>
<comment type="similarity">
    <text evidence="1">Belongs to the class-I pyridoxal-phosphate-dependent aminotransferase family. LL-diaminopimelate aminotransferase subfamily.</text>
</comment>
<feature type="chain" id="PRO_0000342233" description="LL-diaminopimelate aminotransferase">
    <location>
        <begin position="1"/>
        <end position="392"/>
    </location>
</feature>
<feature type="binding site" evidence="1">
    <location>
        <position position="15"/>
    </location>
    <ligand>
        <name>substrate</name>
    </ligand>
</feature>
<feature type="binding site" evidence="1">
    <location>
        <position position="40"/>
    </location>
    <ligand>
        <name>substrate</name>
    </ligand>
</feature>
<feature type="binding site" evidence="1">
    <location>
        <begin position="103"/>
        <end position="104"/>
    </location>
    <ligand>
        <name>pyridoxal 5'-phosphate</name>
        <dbReference type="ChEBI" id="CHEBI:597326"/>
    </ligand>
</feature>
<feature type="binding site" evidence="1">
    <location>
        <position position="104"/>
    </location>
    <ligand>
        <name>substrate</name>
    </ligand>
</feature>
<feature type="binding site" evidence="1">
    <location>
        <position position="128"/>
    </location>
    <ligand>
        <name>pyridoxal 5'-phosphate</name>
        <dbReference type="ChEBI" id="CHEBI:597326"/>
    </ligand>
</feature>
<feature type="binding site" evidence="1">
    <location>
        <position position="128"/>
    </location>
    <ligand>
        <name>substrate</name>
    </ligand>
</feature>
<feature type="binding site" evidence="1">
    <location>
        <position position="178"/>
    </location>
    <ligand>
        <name>pyridoxal 5'-phosphate</name>
        <dbReference type="ChEBI" id="CHEBI:597326"/>
    </ligand>
</feature>
<feature type="binding site" evidence="1">
    <location>
        <position position="178"/>
    </location>
    <ligand>
        <name>substrate</name>
    </ligand>
</feature>
<feature type="binding site" evidence="1">
    <location>
        <position position="209"/>
    </location>
    <ligand>
        <name>pyridoxal 5'-phosphate</name>
        <dbReference type="ChEBI" id="CHEBI:597326"/>
    </ligand>
</feature>
<feature type="binding site" evidence="1">
    <location>
        <begin position="237"/>
        <end position="239"/>
    </location>
    <ligand>
        <name>pyridoxal 5'-phosphate</name>
        <dbReference type="ChEBI" id="CHEBI:597326"/>
    </ligand>
</feature>
<feature type="binding site" evidence="1">
    <location>
        <position position="248"/>
    </location>
    <ligand>
        <name>pyridoxal 5'-phosphate</name>
        <dbReference type="ChEBI" id="CHEBI:597326"/>
    </ligand>
</feature>
<feature type="binding site" evidence="1">
    <location>
        <position position="366"/>
    </location>
    <ligand>
        <name>substrate</name>
    </ligand>
</feature>
<feature type="modified residue" description="N6-(pyridoxal phosphate)lysine" evidence="1">
    <location>
        <position position="240"/>
    </location>
</feature>
<evidence type="ECO:0000255" key="1">
    <source>
        <dbReference type="HAMAP-Rule" id="MF_01642"/>
    </source>
</evidence>
<organism>
    <name type="scientific">Desulforudis audaxviator (strain MP104C)</name>
    <dbReference type="NCBI Taxonomy" id="477974"/>
    <lineage>
        <taxon>Bacteria</taxon>
        <taxon>Bacillati</taxon>
        <taxon>Bacillota</taxon>
        <taxon>Clostridia</taxon>
        <taxon>Thermoanaerobacterales</taxon>
        <taxon>Candidatus Desulforudaceae</taxon>
        <taxon>Candidatus Desulforudis</taxon>
    </lineage>
</organism>
<reference key="1">
    <citation type="submission" date="2007-10" db="EMBL/GenBank/DDBJ databases">
        <title>Complete sequence of chromosome of Desulforudis audaxviator MP104C.</title>
        <authorList>
            <person name="Copeland A."/>
            <person name="Lucas S."/>
            <person name="Lapidus A."/>
            <person name="Barry K."/>
            <person name="Glavina del Rio T."/>
            <person name="Dalin E."/>
            <person name="Tice H."/>
            <person name="Bruce D."/>
            <person name="Pitluck S."/>
            <person name="Lowry S.R."/>
            <person name="Larimer F."/>
            <person name="Land M.L."/>
            <person name="Hauser L."/>
            <person name="Kyrpides N."/>
            <person name="Ivanova N.N."/>
            <person name="Richardson P."/>
        </authorList>
    </citation>
    <scope>NUCLEOTIDE SEQUENCE [LARGE SCALE GENOMIC DNA]</scope>
    <source>
        <strain>MP104C</strain>
    </source>
</reference>
<dbReference type="EC" id="2.6.1.83" evidence="1"/>
<dbReference type="EMBL" id="CP000860">
    <property type="protein sequence ID" value="ACA60105.1"/>
    <property type="molecule type" value="Genomic_DNA"/>
</dbReference>
<dbReference type="RefSeq" id="WP_012302686.1">
    <property type="nucleotide sequence ID" value="NC_010424.1"/>
</dbReference>
<dbReference type="SMR" id="B1I544"/>
<dbReference type="STRING" id="477974.Daud_1603"/>
<dbReference type="KEGG" id="dau:Daud_1603"/>
<dbReference type="eggNOG" id="COG0436">
    <property type="taxonomic scope" value="Bacteria"/>
</dbReference>
<dbReference type="HOGENOM" id="CLU_017584_4_5_9"/>
<dbReference type="OrthoDB" id="9803354at2"/>
<dbReference type="UniPathway" id="UPA00034">
    <property type="reaction ID" value="UER00466"/>
</dbReference>
<dbReference type="Proteomes" id="UP000008544">
    <property type="component" value="Chromosome"/>
</dbReference>
<dbReference type="GO" id="GO:0010285">
    <property type="term" value="F:L,L-diaminopimelate aminotransferase activity"/>
    <property type="evidence" value="ECO:0007669"/>
    <property type="project" value="UniProtKB-UniRule"/>
</dbReference>
<dbReference type="GO" id="GO:0030170">
    <property type="term" value="F:pyridoxal phosphate binding"/>
    <property type="evidence" value="ECO:0007669"/>
    <property type="project" value="UniProtKB-UniRule"/>
</dbReference>
<dbReference type="GO" id="GO:0033362">
    <property type="term" value="P:lysine biosynthetic process via diaminopimelate, diaminopimelate-aminotransferase pathway"/>
    <property type="evidence" value="ECO:0007669"/>
    <property type="project" value="UniProtKB-UniRule"/>
</dbReference>
<dbReference type="CDD" id="cd00609">
    <property type="entry name" value="AAT_like"/>
    <property type="match status" value="1"/>
</dbReference>
<dbReference type="Gene3D" id="3.90.1150.10">
    <property type="entry name" value="Aspartate Aminotransferase, domain 1"/>
    <property type="match status" value="1"/>
</dbReference>
<dbReference type="Gene3D" id="3.40.640.10">
    <property type="entry name" value="Type I PLP-dependent aspartate aminotransferase-like (Major domain)"/>
    <property type="match status" value="1"/>
</dbReference>
<dbReference type="HAMAP" id="MF_01642">
    <property type="entry name" value="DapL_aminotrans_1"/>
    <property type="match status" value="1"/>
</dbReference>
<dbReference type="InterPro" id="IPR004839">
    <property type="entry name" value="Aminotransferase_I/II_large"/>
</dbReference>
<dbReference type="InterPro" id="IPR019881">
    <property type="entry name" value="DAP-NH2Trfase_DapL_Desulfo"/>
</dbReference>
<dbReference type="InterPro" id="IPR019942">
    <property type="entry name" value="DapL/ALD1"/>
</dbReference>
<dbReference type="InterPro" id="IPR050881">
    <property type="entry name" value="LL-DAP_aminotransferase"/>
</dbReference>
<dbReference type="InterPro" id="IPR004838">
    <property type="entry name" value="NHTrfase_class1_PyrdxlP-BS"/>
</dbReference>
<dbReference type="InterPro" id="IPR015424">
    <property type="entry name" value="PyrdxlP-dep_Trfase"/>
</dbReference>
<dbReference type="InterPro" id="IPR015421">
    <property type="entry name" value="PyrdxlP-dep_Trfase_major"/>
</dbReference>
<dbReference type="InterPro" id="IPR015422">
    <property type="entry name" value="PyrdxlP-dep_Trfase_small"/>
</dbReference>
<dbReference type="NCBIfam" id="TIGR03540">
    <property type="entry name" value="DapC_direct"/>
    <property type="match status" value="1"/>
</dbReference>
<dbReference type="NCBIfam" id="NF006756">
    <property type="entry name" value="PRK09276.1"/>
    <property type="match status" value="1"/>
</dbReference>
<dbReference type="PANTHER" id="PTHR42832">
    <property type="entry name" value="AMINO ACID AMINOTRANSFERASE"/>
    <property type="match status" value="1"/>
</dbReference>
<dbReference type="PANTHER" id="PTHR42832:SF3">
    <property type="entry name" value="L-GLUTAMINE--4-(METHYLSULFANYL)-2-OXOBUTANOATE AMINOTRANSFERASE"/>
    <property type="match status" value="1"/>
</dbReference>
<dbReference type="Pfam" id="PF00155">
    <property type="entry name" value="Aminotran_1_2"/>
    <property type="match status" value="1"/>
</dbReference>
<dbReference type="SUPFAM" id="SSF53383">
    <property type="entry name" value="PLP-dependent transferases"/>
    <property type="match status" value="1"/>
</dbReference>
<dbReference type="PROSITE" id="PS00105">
    <property type="entry name" value="AA_TRANSFER_CLASS_1"/>
    <property type="match status" value="1"/>
</dbReference>
<name>DAPAT_DESAP</name>
<sequence length="392" mass="42642">MSFVEAKRIRNLPPYLFARIEQLIADKKAQGVDVISLGIGDPDVPTPDHIIEAAEKELKIPANHQYPSSAGMPAYRRAVADWYARRFGVELDPQREVVSLIGSKEGIAHLPWCFVDPGDVVLVPDPGYPVYAGGTILAGGIPHPVPLTAGNGFLPDLAAIPAETARRAKVMFINYPNNPTGAVASKEFFARVVDFAREYGILVCHDAAYSEIAFDGYRPPSFLEVAGAREVGIEFHSVSKTYNMTGWRAGWAAGNAGAVEALGRLKSNLDSGVFQVVQYAAIAALNGPQDGVQSLCEMYRERRDLVVDTLNDLGWRLTRPRATFYIWAPVPAGHDASSFAEMVLEKAGVVITPGTGYGTYGEGYFRISLTLPTPRLVEAMERLRGCLGRVTF</sequence>
<proteinExistence type="inferred from homology"/>
<gene>
    <name evidence="1" type="primary">dapL</name>
    <name type="ordered locus">Daud_1603</name>
</gene>
<accession>B1I544</accession>
<keyword id="KW-0032">Aminotransferase</keyword>
<keyword id="KW-0663">Pyridoxal phosphate</keyword>
<keyword id="KW-1185">Reference proteome</keyword>
<keyword id="KW-0808">Transferase</keyword>
<protein>
    <recommendedName>
        <fullName evidence="1">LL-diaminopimelate aminotransferase</fullName>
        <shortName evidence="1">DAP-AT</shortName>
        <shortName evidence="1">DAP-aminotransferase</shortName>
        <shortName evidence="1">LL-DAP-aminotransferase</shortName>
        <ecNumber evidence="1">2.6.1.83</ecNumber>
    </recommendedName>
</protein>